<dbReference type="EC" id="6.3.5.-" evidence="1"/>
<dbReference type="EMBL" id="CP001107">
    <property type="protein sequence ID" value="ACR74932.1"/>
    <property type="molecule type" value="Genomic_DNA"/>
</dbReference>
<dbReference type="RefSeq" id="WP_012742033.1">
    <property type="nucleotide sequence ID" value="NC_012781.1"/>
</dbReference>
<dbReference type="SMR" id="C4ZHC0"/>
<dbReference type="STRING" id="515619.EUBREC_1170"/>
<dbReference type="PaxDb" id="515619-EUBREC_1170"/>
<dbReference type="GeneID" id="86988017"/>
<dbReference type="KEGG" id="ere:EUBREC_1170"/>
<dbReference type="HOGENOM" id="CLU_019240_0_0_9"/>
<dbReference type="Proteomes" id="UP000001477">
    <property type="component" value="Chromosome"/>
</dbReference>
<dbReference type="GO" id="GO:0050566">
    <property type="term" value="F:asparaginyl-tRNA synthase (glutamine-hydrolyzing) activity"/>
    <property type="evidence" value="ECO:0007669"/>
    <property type="project" value="RHEA"/>
</dbReference>
<dbReference type="GO" id="GO:0005524">
    <property type="term" value="F:ATP binding"/>
    <property type="evidence" value="ECO:0007669"/>
    <property type="project" value="UniProtKB-KW"/>
</dbReference>
<dbReference type="GO" id="GO:0050567">
    <property type="term" value="F:glutaminyl-tRNA synthase (glutamine-hydrolyzing) activity"/>
    <property type="evidence" value="ECO:0007669"/>
    <property type="project" value="UniProtKB-UniRule"/>
</dbReference>
<dbReference type="GO" id="GO:0070681">
    <property type="term" value="P:glutaminyl-tRNAGln biosynthesis via transamidation"/>
    <property type="evidence" value="ECO:0007669"/>
    <property type="project" value="TreeGrafter"/>
</dbReference>
<dbReference type="GO" id="GO:0006412">
    <property type="term" value="P:translation"/>
    <property type="evidence" value="ECO:0007669"/>
    <property type="project" value="UniProtKB-UniRule"/>
</dbReference>
<dbReference type="FunFam" id="1.10.10.410:FF:000001">
    <property type="entry name" value="Aspartyl/glutamyl-tRNA(Asn/Gln) amidotransferase subunit B"/>
    <property type="match status" value="1"/>
</dbReference>
<dbReference type="Gene3D" id="1.10.10.410">
    <property type="match status" value="1"/>
</dbReference>
<dbReference type="Gene3D" id="1.10.150.380">
    <property type="entry name" value="GatB domain, N-terminal subdomain"/>
    <property type="match status" value="1"/>
</dbReference>
<dbReference type="HAMAP" id="MF_00121">
    <property type="entry name" value="GatB"/>
    <property type="match status" value="1"/>
</dbReference>
<dbReference type="InterPro" id="IPR017959">
    <property type="entry name" value="Asn/Gln-tRNA_amidoTrfase_suB/E"/>
</dbReference>
<dbReference type="InterPro" id="IPR006075">
    <property type="entry name" value="Asn/Gln-tRNA_Trfase_suB/E_cat"/>
</dbReference>
<dbReference type="InterPro" id="IPR018027">
    <property type="entry name" value="Asn/Gln_amidotransferase"/>
</dbReference>
<dbReference type="InterPro" id="IPR003789">
    <property type="entry name" value="Asn/Gln_tRNA_amidoTrase-B-like"/>
</dbReference>
<dbReference type="InterPro" id="IPR004413">
    <property type="entry name" value="GatB"/>
</dbReference>
<dbReference type="InterPro" id="IPR042114">
    <property type="entry name" value="GatB_C_1"/>
</dbReference>
<dbReference type="InterPro" id="IPR023168">
    <property type="entry name" value="GatB_Yqey_C_2"/>
</dbReference>
<dbReference type="InterPro" id="IPR017958">
    <property type="entry name" value="Gln-tRNA_amidoTrfase_suB_CS"/>
</dbReference>
<dbReference type="InterPro" id="IPR014746">
    <property type="entry name" value="Gln_synth/guanido_kin_cat_dom"/>
</dbReference>
<dbReference type="NCBIfam" id="TIGR00133">
    <property type="entry name" value="gatB"/>
    <property type="match status" value="1"/>
</dbReference>
<dbReference type="NCBIfam" id="NF004012">
    <property type="entry name" value="PRK05477.1-2"/>
    <property type="match status" value="1"/>
</dbReference>
<dbReference type="NCBIfam" id="NF004014">
    <property type="entry name" value="PRK05477.1-4"/>
    <property type="match status" value="1"/>
</dbReference>
<dbReference type="PANTHER" id="PTHR11659">
    <property type="entry name" value="GLUTAMYL-TRNA GLN AMIDOTRANSFERASE SUBUNIT B MITOCHONDRIAL AND PROKARYOTIC PET112-RELATED"/>
    <property type="match status" value="1"/>
</dbReference>
<dbReference type="PANTHER" id="PTHR11659:SF0">
    <property type="entry name" value="GLUTAMYL-TRNA(GLN) AMIDOTRANSFERASE SUBUNIT B, MITOCHONDRIAL"/>
    <property type="match status" value="1"/>
</dbReference>
<dbReference type="Pfam" id="PF02934">
    <property type="entry name" value="GatB_N"/>
    <property type="match status" value="1"/>
</dbReference>
<dbReference type="Pfam" id="PF02637">
    <property type="entry name" value="GatB_Yqey"/>
    <property type="match status" value="1"/>
</dbReference>
<dbReference type="SMART" id="SM00845">
    <property type="entry name" value="GatB_Yqey"/>
    <property type="match status" value="1"/>
</dbReference>
<dbReference type="SUPFAM" id="SSF89095">
    <property type="entry name" value="GatB/YqeY motif"/>
    <property type="match status" value="1"/>
</dbReference>
<dbReference type="SUPFAM" id="SSF55931">
    <property type="entry name" value="Glutamine synthetase/guanido kinase"/>
    <property type="match status" value="1"/>
</dbReference>
<dbReference type="PROSITE" id="PS01234">
    <property type="entry name" value="GATB"/>
    <property type="match status" value="1"/>
</dbReference>
<proteinExistence type="inferred from homology"/>
<protein>
    <recommendedName>
        <fullName evidence="1">Aspartyl/glutamyl-tRNA(Asn/Gln) amidotransferase subunit B</fullName>
        <shortName evidence="1">Asp/Glu-ADT subunit B</shortName>
        <ecNumber evidence="1">6.3.5.-</ecNumber>
    </recommendedName>
</protein>
<name>GATB_AGARV</name>
<comment type="function">
    <text evidence="1">Allows the formation of correctly charged Asn-tRNA(Asn) or Gln-tRNA(Gln) through the transamidation of misacylated Asp-tRNA(Asn) or Glu-tRNA(Gln) in organisms which lack either or both of asparaginyl-tRNA or glutaminyl-tRNA synthetases. The reaction takes place in the presence of glutamine and ATP through an activated phospho-Asp-tRNA(Asn) or phospho-Glu-tRNA(Gln).</text>
</comment>
<comment type="catalytic activity">
    <reaction evidence="1">
        <text>L-glutamyl-tRNA(Gln) + L-glutamine + ATP + H2O = L-glutaminyl-tRNA(Gln) + L-glutamate + ADP + phosphate + H(+)</text>
        <dbReference type="Rhea" id="RHEA:17521"/>
        <dbReference type="Rhea" id="RHEA-COMP:9681"/>
        <dbReference type="Rhea" id="RHEA-COMP:9684"/>
        <dbReference type="ChEBI" id="CHEBI:15377"/>
        <dbReference type="ChEBI" id="CHEBI:15378"/>
        <dbReference type="ChEBI" id="CHEBI:29985"/>
        <dbReference type="ChEBI" id="CHEBI:30616"/>
        <dbReference type="ChEBI" id="CHEBI:43474"/>
        <dbReference type="ChEBI" id="CHEBI:58359"/>
        <dbReference type="ChEBI" id="CHEBI:78520"/>
        <dbReference type="ChEBI" id="CHEBI:78521"/>
        <dbReference type="ChEBI" id="CHEBI:456216"/>
    </reaction>
</comment>
<comment type="catalytic activity">
    <reaction evidence="1">
        <text>L-aspartyl-tRNA(Asn) + L-glutamine + ATP + H2O = L-asparaginyl-tRNA(Asn) + L-glutamate + ADP + phosphate + 2 H(+)</text>
        <dbReference type="Rhea" id="RHEA:14513"/>
        <dbReference type="Rhea" id="RHEA-COMP:9674"/>
        <dbReference type="Rhea" id="RHEA-COMP:9677"/>
        <dbReference type="ChEBI" id="CHEBI:15377"/>
        <dbReference type="ChEBI" id="CHEBI:15378"/>
        <dbReference type="ChEBI" id="CHEBI:29985"/>
        <dbReference type="ChEBI" id="CHEBI:30616"/>
        <dbReference type="ChEBI" id="CHEBI:43474"/>
        <dbReference type="ChEBI" id="CHEBI:58359"/>
        <dbReference type="ChEBI" id="CHEBI:78515"/>
        <dbReference type="ChEBI" id="CHEBI:78516"/>
        <dbReference type="ChEBI" id="CHEBI:456216"/>
    </reaction>
</comment>
<comment type="subunit">
    <text evidence="1">Heterotrimer of A, B and C subunits.</text>
</comment>
<comment type="similarity">
    <text evidence="1">Belongs to the GatB/GatE family. GatB subfamily.</text>
</comment>
<keyword id="KW-0067">ATP-binding</keyword>
<keyword id="KW-0436">Ligase</keyword>
<keyword id="KW-0547">Nucleotide-binding</keyword>
<keyword id="KW-0648">Protein biosynthesis</keyword>
<sequence>MKNYETVIGLEVHVELATKTKIFCACSTAFGGAPNTHTCPVCTGQPGSLPVLNKQVVEYAVAVGLATNCTITQYSKFDRKNYFYPDNPQNYQISQLYLPICRNGSVEIETANGKKNVRIHEIHMEEDAGKLVHDEWEDVSIVDYNRSGVPLIEIVSEPDMRSAEEVIAYLETLRQTIQYLGASDCKLNEGSMRADVNISVREVGAKKFGTRTEMKNLNSFKAIAHAIEGERERQIELLEMGRKVVQETRRWDDNKESSHAMRSKEDAQDYRYFPEPDLVPIVVSDEWIAQIKAKQPELRPQKLARYKKEYDIPEYDAKILTESKHMADIFEAATKLCGKPKKVSNWLMVETMRLLKDNDMDADAIKFSPVNLAKLVDLVDAGTINSSVAKEVFEKIFREDIDPEQYVEENGLKSMNDEGELKVTIQAVIDANPQAVEDYHNGKKKAIGALVGQTMKATKGKANPAVVNKLLMELL</sequence>
<evidence type="ECO:0000255" key="1">
    <source>
        <dbReference type="HAMAP-Rule" id="MF_00121"/>
    </source>
</evidence>
<gene>
    <name evidence="1" type="primary">gatB</name>
    <name type="ordered locus">EUBREC_1170</name>
</gene>
<accession>C4ZHC0</accession>
<reference key="1">
    <citation type="journal article" date="2009" name="Proc. Natl. Acad. Sci. U.S.A.">
        <title>Characterizing a model human gut microbiota composed of members of its two dominant bacterial phyla.</title>
        <authorList>
            <person name="Mahowald M.A."/>
            <person name="Rey F.E."/>
            <person name="Seedorf H."/>
            <person name="Turnbaugh P.J."/>
            <person name="Fulton R.S."/>
            <person name="Wollam A."/>
            <person name="Shah N."/>
            <person name="Wang C."/>
            <person name="Magrini V."/>
            <person name="Wilson R.K."/>
            <person name="Cantarel B.L."/>
            <person name="Coutinho P.M."/>
            <person name="Henrissat B."/>
            <person name="Crock L.W."/>
            <person name="Russell A."/>
            <person name="Verberkmoes N.C."/>
            <person name="Hettich R.L."/>
            <person name="Gordon J.I."/>
        </authorList>
    </citation>
    <scope>NUCLEOTIDE SEQUENCE [LARGE SCALE GENOMIC DNA]</scope>
    <source>
        <strain>ATCC 33656 / DSM 3377 / JCM 17463 / KCTC 5835 / LMG 30912 / VPI 0990</strain>
    </source>
</reference>
<feature type="chain" id="PRO_1000203053" description="Aspartyl/glutamyl-tRNA(Asn/Gln) amidotransferase subunit B">
    <location>
        <begin position="1"/>
        <end position="475"/>
    </location>
</feature>
<organism>
    <name type="scientific">Agathobacter rectalis (strain ATCC 33656 / DSM 3377 / JCM 17463 / KCTC 5835 / VPI 0990)</name>
    <name type="common">Eubacterium rectale</name>
    <dbReference type="NCBI Taxonomy" id="515619"/>
    <lineage>
        <taxon>Bacteria</taxon>
        <taxon>Bacillati</taxon>
        <taxon>Bacillota</taxon>
        <taxon>Clostridia</taxon>
        <taxon>Lachnospirales</taxon>
        <taxon>Lachnospiraceae</taxon>
        <taxon>Agathobacter</taxon>
    </lineage>
</organism>